<accession>C3K3L6</accession>
<comment type="function">
    <text evidence="2">Catalyzes the formation of N(7)-methylguanine at position 46 (m7G46) in tRNA.</text>
</comment>
<comment type="catalytic activity">
    <reaction evidence="2">
        <text>guanosine(46) in tRNA + S-adenosyl-L-methionine = N(7)-methylguanosine(46) in tRNA + S-adenosyl-L-homocysteine</text>
        <dbReference type="Rhea" id="RHEA:42708"/>
        <dbReference type="Rhea" id="RHEA-COMP:10188"/>
        <dbReference type="Rhea" id="RHEA-COMP:10189"/>
        <dbReference type="ChEBI" id="CHEBI:57856"/>
        <dbReference type="ChEBI" id="CHEBI:59789"/>
        <dbReference type="ChEBI" id="CHEBI:74269"/>
        <dbReference type="ChEBI" id="CHEBI:74480"/>
        <dbReference type="EC" id="2.1.1.33"/>
    </reaction>
</comment>
<comment type="pathway">
    <text evidence="2">tRNA modification; N(7)-methylguanine-tRNA biosynthesis.</text>
</comment>
<comment type="similarity">
    <text evidence="2">Belongs to the class I-like SAM-binding methyltransferase superfamily. TrmB family.</text>
</comment>
<organism>
    <name type="scientific">Pseudomonas fluorescens (strain SBW25)</name>
    <dbReference type="NCBI Taxonomy" id="216595"/>
    <lineage>
        <taxon>Bacteria</taxon>
        <taxon>Pseudomonadati</taxon>
        <taxon>Pseudomonadota</taxon>
        <taxon>Gammaproteobacteria</taxon>
        <taxon>Pseudomonadales</taxon>
        <taxon>Pseudomonadaceae</taxon>
        <taxon>Pseudomonas</taxon>
    </lineage>
</organism>
<protein>
    <recommendedName>
        <fullName evidence="2">tRNA (guanine-N(7)-)-methyltransferase</fullName>
        <ecNumber evidence="2">2.1.1.33</ecNumber>
    </recommendedName>
    <alternativeName>
        <fullName evidence="2">tRNA (guanine(46)-N(7))-methyltransferase</fullName>
    </alternativeName>
    <alternativeName>
        <fullName evidence="2">tRNA(m7G46)-methyltransferase</fullName>
    </alternativeName>
</protein>
<name>TRMB_PSEFS</name>
<feature type="chain" id="PRO_1000213442" description="tRNA (guanine-N(7)-)-methyltransferase">
    <location>
        <begin position="1"/>
        <end position="241"/>
    </location>
</feature>
<feature type="region of interest" description="Disordered" evidence="3">
    <location>
        <begin position="1"/>
        <end position="21"/>
    </location>
</feature>
<feature type="compositionally biased region" description="Polar residues" evidence="3">
    <location>
        <begin position="1"/>
        <end position="10"/>
    </location>
</feature>
<feature type="active site" evidence="1">
    <location>
        <position position="146"/>
    </location>
</feature>
<feature type="binding site" evidence="2">
    <location>
        <position position="71"/>
    </location>
    <ligand>
        <name>S-adenosyl-L-methionine</name>
        <dbReference type="ChEBI" id="CHEBI:59789"/>
    </ligand>
</feature>
<feature type="binding site" evidence="2">
    <location>
        <position position="96"/>
    </location>
    <ligand>
        <name>S-adenosyl-L-methionine</name>
        <dbReference type="ChEBI" id="CHEBI:59789"/>
    </ligand>
</feature>
<feature type="binding site" evidence="2">
    <location>
        <position position="123"/>
    </location>
    <ligand>
        <name>S-adenosyl-L-methionine</name>
        <dbReference type="ChEBI" id="CHEBI:59789"/>
    </ligand>
</feature>
<feature type="binding site" evidence="2">
    <location>
        <position position="146"/>
    </location>
    <ligand>
        <name>S-adenosyl-L-methionine</name>
        <dbReference type="ChEBI" id="CHEBI:59789"/>
    </ligand>
</feature>
<feature type="binding site" evidence="2">
    <location>
        <position position="150"/>
    </location>
    <ligand>
        <name>substrate</name>
    </ligand>
</feature>
<feature type="binding site" evidence="2">
    <location>
        <position position="182"/>
    </location>
    <ligand>
        <name>substrate</name>
    </ligand>
</feature>
<feature type="binding site" evidence="2">
    <location>
        <begin position="219"/>
        <end position="222"/>
    </location>
    <ligand>
        <name>substrate</name>
    </ligand>
</feature>
<gene>
    <name evidence="2" type="primary">trmB</name>
    <name type="ordered locus">PFLU_5772</name>
</gene>
<dbReference type="EC" id="2.1.1.33" evidence="2"/>
<dbReference type="EMBL" id="AM181176">
    <property type="protein sequence ID" value="CAY53159.1"/>
    <property type="molecule type" value="Genomic_DNA"/>
</dbReference>
<dbReference type="RefSeq" id="WP_015886352.1">
    <property type="nucleotide sequence ID" value="NC_012660.1"/>
</dbReference>
<dbReference type="SMR" id="C3K3L6"/>
<dbReference type="STRING" id="294.SRM1_05424"/>
<dbReference type="eggNOG" id="COG0220">
    <property type="taxonomic scope" value="Bacteria"/>
</dbReference>
<dbReference type="HOGENOM" id="CLU_050910_0_1_6"/>
<dbReference type="OrthoDB" id="9802090at2"/>
<dbReference type="UniPathway" id="UPA00989"/>
<dbReference type="GO" id="GO:0043527">
    <property type="term" value="C:tRNA methyltransferase complex"/>
    <property type="evidence" value="ECO:0007669"/>
    <property type="project" value="TreeGrafter"/>
</dbReference>
<dbReference type="GO" id="GO:0008176">
    <property type="term" value="F:tRNA (guanine(46)-N7)-methyltransferase activity"/>
    <property type="evidence" value="ECO:0007669"/>
    <property type="project" value="UniProtKB-UniRule"/>
</dbReference>
<dbReference type="CDD" id="cd02440">
    <property type="entry name" value="AdoMet_MTases"/>
    <property type="match status" value="1"/>
</dbReference>
<dbReference type="FunFam" id="3.40.50.150:FF:000035">
    <property type="entry name" value="tRNA (guanine-N(7)-)-methyltransferase"/>
    <property type="match status" value="1"/>
</dbReference>
<dbReference type="Gene3D" id="3.40.50.150">
    <property type="entry name" value="Vaccinia Virus protein VP39"/>
    <property type="match status" value="1"/>
</dbReference>
<dbReference type="HAMAP" id="MF_01057">
    <property type="entry name" value="tRNA_methyltr_TrmB"/>
    <property type="match status" value="1"/>
</dbReference>
<dbReference type="InterPro" id="IPR029063">
    <property type="entry name" value="SAM-dependent_MTases_sf"/>
</dbReference>
<dbReference type="InterPro" id="IPR003358">
    <property type="entry name" value="tRNA_(Gua-N-7)_MeTrfase_Trmb"/>
</dbReference>
<dbReference type="InterPro" id="IPR055361">
    <property type="entry name" value="tRNA_methyltr_TrmB_bact"/>
</dbReference>
<dbReference type="NCBIfam" id="TIGR00091">
    <property type="entry name" value="tRNA (guanosine(46)-N7)-methyltransferase TrmB"/>
    <property type="match status" value="1"/>
</dbReference>
<dbReference type="PANTHER" id="PTHR23417">
    <property type="entry name" value="3-DEOXY-D-MANNO-OCTULOSONIC-ACID TRANSFERASE/TRNA GUANINE-N 7 - -METHYLTRANSFERASE"/>
    <property type="match status" value="1"/>
</dbReference>
<dbReference type="PANTHER" id="PTHR23417:SF14">
    <property type="entry name" value="PENTACOTRIPEPTIDE-REPEAT REGION OF PRORP DOMAIN-CONTAINING PROTEIN"/>
    <property type="match status" value="1"/>
</dbReference>
<dbReference type="Pfam" id="PF02390">
    <property type="entry name" value="Methyltransf_4"/>
    <property type="match status" value="1"/>
</dbReference>
<dbReference type="SUPFAM" id="SSF53335">
    <property type="entry name" value="S-adenosyl-L-methionine-dependent methyltransferases"/>
    <property type="match status" value="1"/>
</dbReference>
<dbReference type="PROSITE" id="PS51625">
    <property type="entry name" value="SAM_MT_TRMB"/>
    <property type="match status" value="1"/>
</dbReference>
<sequence length="241" mass="27007">MTESNETPNTPEAGDESKHRRIKSFVMRAGRMTEGQQKGLEQGTPLFVLPLADAPVDYDQVFGRSAPRSLEIGFGMGHSLLEMAAAAPDQDFIGVEVHRPGVGALLNGVLTQGLTNLRVYDCDAIEVLNRCIADNSLDRLMLFFPDPWHKARHHKRRIVQASFAELVRSKLKVGGILHMATDWEPYAEYMLEVMNVAPGYRNLAEDGKCVPRPAERPITKFERRGERLGHGVWDLKFEKLA</sequence>
<reference key="1">
    <citation type="journal article" date="2009" name="Genome Biol.">
        <title>Genomic and genetic analyses of diversity and plant interactions of Pseudomonas fluorescens.</title>
        <authorList>
            <person name="Silby M.W."/>
            <person name="Cerdeno-Tarraga A.M."/>
            <person name="Vernikos G.S."/>
            <person name="Giddens S.R."/>
            <person name="Jackson R.W."/>
            <person name="Preston G.M."/>
            <person name="Zhang X.-X."/>
            <person name="Moon C.D."/>
            <person name="Gehrig S.M."/>
            <person name="Godfrey S.A.C."/>
            <person name="Knight C.G."/>
            <person name="Malone J.G."/>
            <person name="Robinson Z."/>
            <person name="Spiers A.J."/>
            <person name="Harris S."/>
            <person name="Challis G.L."/>
            <person name="Yaxley A.M."/>
            <person name="Harris D."/>
            <person name="Seeger K."/>
            <person name="Murphy L."/>
            <person name="Rutter S."/>
            <person name="Squares R."/>
            <person name="Quail M.A."/>
            <person name="Saunders E."/>
            <person name="Mavromatis K."/>
            <person name="Brettin T.S."/>
            <person name="Bentley S.D."/>
            <person name="Hothersall J."/>
            <person name="Stephens E."/>
            <person name="Thomas C.M."/>
            <person name="Parkhill J."/>
            <person name="Levy S.B."/>
            <person name="Rainey P.B."/>
            <person name="Thomson N.R."/>
        </authorList>
    </citation>
    <scope>NUCLEOTIDE SEQUENCE [LARGE SCALE GENOMIC DNA]</scope>
    <source>
        <strain>SBW25</strain>
    </source>
</reference>
<proteinExistence type="inferred from homology"/>
<keyword id="KW-0489">Methyltransferase</keyword>
<keyword id="KW-0949">S-adenosyl-L-methionine</keyword>
<keyword id="KW-0808">Transferase</keyword>
<keyword id="KW-0819">tRNA processing</keyword>
<evidence type="ECO:0000250" key="1"/>
<evidence type="ECO:0000255" key="2">
    <source>
        <dbReference type="HAMAP-Rule" id="MF_01057"/>
    </source>
</evidence>
<evidence type="ECO:0000256" key="3">
    <source>
        <dbReference type="SAM" id="MobiDB-lite"/>
    </source>
</evidence>